<accession>Q68D42</accession>
<accession>Q6ZUU2</accession>
<feature type="chain" id="PRO_0000319324" description="Transmembrane protein 215">
    <location>
        <begin position="1"/>
        <end position="235"/>
    </location>
</feature>
<feature type="transmembrane region" description="Helical" evidence="1">
    <location>
        <begin position="12"/>
        <end position="32"/>
    </location>
</feature>
<feature type="transmembrane region" description="Helical" evidence="1">
    <location>
        <begin position="40"/>
        <end position="60"/>
    </location>
</feature>
<feature type="region of interest" description="Disordered" evidence="2">
    <location>
        <begin position="99"/>
        <end position="145"/>
    </location>
</feature>
<feature type="compositionally biased region" description="Polar residues" evidence="2">
    <location>
        <begin position="125"/>
        <end position="140"/>
    </location>
</feature>
<feature type="sequence conflict" description="In Ref. 1; BAC86126." evidence="3" ref="1">
    <original>W</original>
    <variation>R</variation>
    <location>
        <position position="69"/>
    </location>
</feature>
<keyword id="KW-0472">Membrane</keyword>
<keyword id="KW-1185">Reference proteome</keyword>
<keyword id="KW-0812">Transmembrane</keyword>
<keyword id="KW-1133">Transmembrane helix</keyword>
<reference key="1">
    <citation type="journal article" date="2004" name="Nat. Genet.">
        <title>Complete sequencing and characterization of 21,243 full-length human cDNAs.</title>
        <authorList>
            <person name="Ota T."/>
            <person name="Suzuki Y."/>
            <person name="Nishikawa T."/>
            <person name="Otsuki T."/>
            <person name="Sugiyama T."/>
            <person name="Irie R."/>
            <person name="Wakamatsu A."/>
            <person name="Hayashi K."/>
            <person name="Sato H."/>
            <person name="Nagai K."/>
            <person name="Kimura K."/>
            <person name="Makita H."/>
            <person name="Sekine M."/>
            <person name="Obayashi M."/>
            <person name="Nishi T."/>
            <person name="Shibahara T."/>
            <person name="Tanaka T."/>
            <person name="Ishii S."/>
            <person name="Yamamoto J."/>
            <person name="Saito K."/>
            <person name="Kawai Y."/>
            <person name="Isono Y."/>
            <person name="Nakamura Y."/>
            <person name="Nagahari K."/>
            <person name="Murakami K."/>
            <person name="Yasuda T."/>
            <person name="Iwayanagi T."/>
            <person name="Wagatsuma M."/>
            <person name="Shiratori A."/>
            <person name="Sudo H."/>
            <person name="Hosoiri T."/>
            <person name="Kaku Y."/>
            <person name="Kodaira H."/>
            <person name="Kondo H."/>
            <person name="Sugawara M."/>
            <person name="Takahashi M."/>
            <person name="Kanda K."/>
            <person name="Yokoi T."/>
            <person name="Furuya T."/>
            <person name="Kikkawa E."/>
            <person name="Omura Y."/>
            <person name="Abe K."/>
            <person name="Kamihara K."/>
            <person name="Katsuta N."/>
            <person name="Sato K."/>
            <person name="Tanikawa M."/>
            <person name="Yamazaki M."/>
            <person name="Ninomiya K."/>
            <person name="Ishibashi T."/>
            <person name="Yamashita H."/>
            <person name="Murakawa K."/>
            <person name="Fujimori K."/>
            <person name="Tanai H."/>
            <person name="Kimata M."/>
            <person name="Watanabe M."/>
            <person name="Hiraoka S."/>
            <person name="Chiba Y."/>
            <person name="Ishida S."/>
            <person name="Ono Y."/>
            <person name="Takiguchi S."/>
            <person name="Watanabe S."/>
            <person name="Yosida M."/>
            <person name="Hotuta T."/>
            <person name="Kusano J."/>
            <person name="Kanehori K."/>
            <person name="Takahashi-Fujii A."/>
            <person name="Hara H."/>
            <person name="Tanase T.-O."/>
            <person name="Nomura Y."/>
            <person name="Togiya S."/>
            <person name="Komai F."/>
            <person name="Hara R."/>
            <person name="Takeuchi K."/>
            <person name="Arita M."/>
            <person name="Imose N."/>
            <person name="Musashino K."/>
            <person name="Yuuki H."/>
            <person name="Oshima A."/>
            <person name="Sasaki N."/>
            <person name="Aotsuka S."/>
            <person name="Yoshikawa Y."/>
            <person name="Matsunawa H."/>
            <person name="Ichihara T."/>
            <person name="Shiohata N."/>
            <person name="Sano S."/>
            <person name="Moriya S."/>
            <person name="Momiyama H."/>
            <person name="Satoh N."/>
            <person name="Takami S."/>
            <person name="Terashima Y."/>
            <person name="Suzuki O."/>
            <person name="Nakagawa S."/>
            <person name="Senoh A."/>
            <person name="Mizoguchi H."/>
            <person name="Goto Y."/>
            <person name="Shimizu F."/>
            <person name="Wakebe H."/>
            <person name="Hishigaki H."/>
            <person name="Watanabe T."/>
            <person name="Sugiyama A."/>
            <person name="Takemoto M."/>
            <person name="Kawakami B."/>
            <person name="Yamazaki M."/>
            <person name="Watanabe K."/>
            <person name="Kumagai A."/>
            <person name="Itakura S."/>
            <person name="Fukuzumi Y."/>
            <person name="Fujimori Y."/>
            <person name="Komiyama M."/>
            <person name="Tashiro H."/>
            <person name="Tanigami A."/>
            <person name="Fujiwara T."/>
            <person name="Ono T."/>
            <person name="Yamada K."/>
            <person name="Fujii Y."/>
            <person name="Ozaki K."/>
            <person name="Hirao M."/>
            <person name="Ohmori Y."/>
            <person name="Kawabata A."/>
            <person name="Hikiji T."/>
            <person name="Kobatake N."/>
            <person name="Inagaki H."/>
            <person name="Ikema Y."/>
            <person name="Okamoto S."/>
            <person name="Okitani R."/>
            <person name="Kawakami T."/>
            <person name="Noguchi S."/>
            <person name="Itoh T."/>
            <person name="Shigeta K."/>
            <person name="Senba T."/>
            <person name="Matsumura K."/>
            <person name="Nakajima Y."/>
            <person name="Mizuno T."/>
            <person name="Morinaga M."/>
            <person name="Sasaki M."/>
            <person name="Togashi T."/>
            <person name="Oyama M."/>
            <person name="Hata H."/>
            <person name="Watanabe M."/>
            <person name="Komatsu T."/>
            <person name="Mizushima-Sugano J."/>
            <person name="Satoh T."/>
            <person name="Shirai Y."/>
            <person name="Takahashi Y."/>
            <person name="Nakagawa K."/>
            <person name="Okumura K."/>
            <person name="Nagase T."/>
            <person name="Nomura N."/>
            <person name="Kikuchi H."/>
            <person name="Masuho Y."/>
            <person name="Yamashita R."/>
            <person name="Nakai K."/>
            <person name="Yada T."/>
            <person name="Nakamura Y."/>
            <person name="Ohara O."/>
            <person name="Isogai T."/>
            <person name="Sugano S."/>
        </authorList>
    </citation>
    <scope>NUCLEOTIDE SEQUENCE [LARGE SCALE MRNA]</scope>
    <source>
        <tissue>Teratocarcinoma</tissue>
    </source>
</reference>
<reference key="2">
    <citation type="journal article" date="2007" name="BMC Genomics">
        <title>The full-ORF clone resource of the German cDNA consortium.</title>
        <authorList>
            <person name="Bechtel S."/>
            <person name="Rosenfelder H."/>
            <person name="Duda A."/>
            <person name="Schmidt C.P."/>
            <person name="Ernst U."/>
            <person name="Wellenreuther R."/>
            <person name="Mehrle A."/>
            <person name="Schuster C."/>
            <person name="Bahr A."/>
            <person name="Bloecker H."/>
            <person name="Heubner D."/>
            <person name="Hoerlein A."/>
            <person name="Michel G."/>
            <person name="Wedler H."/>
            <person name="Koehrer K."/>
            <person name="Ottenwaelder B."/>
            <person name="Poustka A."/>
            <person name="Wiemann S."/>
            <person name="Schupp I."/>
        </authorList>
    </citation>
    <scope>NUCLEOTIDE SEQUENCE [LARGE SCALE MRNA]</scope>
    <source>
        <tissue>Retina</tissue>
    </source>
</reference>
<reference key="3">
    <citation type="submission" date="2005-09" db="EMBL/GenBank/DDBJ databases">
        <authorList>
            <person name="Mural R.J."/>
            <person name="Istrail S."/>
            <person name="Sutton G.G."/>
            <person name="Florea L."/>
            <person name="Halpern A.L."/>
            <person name="Mobarry C.M."/>
            <person name="Lippert R."/>
            <person name="Walenz B."/>
            <person name="Shatkay H."/>
            <person name="Dew I."/>
            <person name="Miller J.R."/>
            <person name="Flanigan M.J."/>
            <person name="Edwards N.J."/>
            <person name="Bolanos R."/>
            <person name="Fasulo D."/>
            <person name="Halldorsson B.V."/>
            <person name="Hannenhalli S."/>
            <person name="Turner R."/>
            <person name="Yooseph S."/>
            <person name="Lu F."/>
            <person name="Nusskern D.R."/>
            <person name="Shue B.C."/>
            <person name="Zheng X.H."/>
            <person name="Zhong F."/>
            <person name="Delcher A.L."/>
            <person name="Huson D.H."/>
            <person name="Kravitz S.A."/>
            <person name="Mouchard L."/>
            <person name="Reinert K."/>
            <person name="Remington K.A."/>
            <person name="Clark A.G."/>
            <person name="Waterman M.S."/>
            <person name="Eichler E.E."/>
            <person name="Adams M.D."/>
            <person name="Hunkapiller M.W."/>
            <person name="Myers E.W."/>
            <person name="Venter J.C."/>
        </authorList>
    </citation>
    <scope>NUCLEOTIDE SEQUENCE [LARGE SCALE GENOMIC DNA]</scope>
</reference>
<comment type="subcellular location">
    <subcellularLocation>
        <location evidence="3">Membrane</location>
        <topology evidence="3">Multi-pass membrane protein</topology>
    </subcellularLocation>
</comment>
<organism>
    <name type="scientific">Homo sapiens</name>
    <name type="common">Human</name>
    <dbReference type="NCBI Taxonomy" id="9606"/>
    <lineage>
        <taxon>Eukaryota</taxon>
        <taxon>Metazoa</taxon>
        <taxon>Chordata</taxon>
        <taxon>Craniata</taxon>
        <taxon>Vertebrata</taxon>
        <taxon>Euteleostomi</taxon>
        <taxon>Mammalia</taxon>
        <taxon>Eutheria</taxon>
        <taxon>Euarchontoglires</taxon>
        <taxon>Primates</taxon>
        <taxon>Haplorrhini</taxon>
        <taxon>Catarrhini</taxon>
        <taxon>Hominidae</taxon>
        <taxon>Homo</taxon>
    </lineage>
</organism>
<proteinExistence type="evidence at transcript level"/>
<evidence type="ECO:0000255" key="1"/>
<evidence type="ECO:0000256" key="2">
    <source>
        <dbReference type="SAM" id="MobiDB-lite"/>
    </source>
</evidence>
<evidence type="ECO:0000305" key="3"/>
<protein>
    <recommendedName>
        <fullName>Transmembrane protein 215</fullName>
    </recommendedName>
</protein>
<dbReference type="EMBL" id="AK125320">
    <property type="protein sequence ID" value="BAC86126.1"/>
    <property type="molecule type" value="mRNA"/>
</dbReference>
<dbReference type="EMBL" id="BX647550">
    <property type="protein sequence ID" value="CAH56136.1"/>
    <property type="molecule type" value="mRNA"/>
</dbReference>
<dbReference type="EMBL" id="CR749589">
    <property type="protein sequence ID" value="CAH18388.1"/>
    <property type="molecule type" value="mRNA"/>
</dbReference>
<dbReference type="EMBL" id="CH471071">
    <property type="protein sequence ID" value="EAW58539.1"/>
    <property type="molecule type" value="Genomic_DNA"/>
</dbReference>
<dbReference type="CCDS" id="CCDS6530.1"/>
<dbReference type="RefSeq" id="NP_997723.2">
    <property type="nucleotide sequence ID" value="NM_212558.3"/>
</dbReference>
<dbReference type="STRING" id="9606.ENSP00000345468"/>
<dbReference type="iPTMnet" id="Q68D42"/>
<dbReference type="PhosphoSitePlus" id="Q68D42"/>
<dbReference type="BioMuta" id="TMEM215"/>
<dbReference type="DMDM" id="74748275"/>
<dbReference type="MassIVE" id="Q68D42"/>
<dbReference type="PaxDb" id="9606-ENSP00000345468"/>
<dbReference type="PeptideAtlas" id="Q68D42"/>
<dbReference type="ProteomicsDB" id="66049"/>
<dbReference type="Antibodypedia" id="63219">
    <property type="antibodies" value="24 antibodies from 9 providers"/>
</dbReference>
<dbReference type="DNASU" id="401498"/>
<dbReference type="Ensembl" id="ENST00000342743.6">
    <property type="protein sequence ID" value="ENSP00000345468.5"/>
    <property type="gene ID" value="ENSG00000188133.6"/>
</dbReference>
<dbReference type="GeneID" id="401498"/>
<dbReference type="KEGG" id="hsa:401498"/>
<dbReference type="MANE-Select" id="ENST00000342743.6">
    <property type="protein sequence ID" value="ENSP00000345468.5"/>
    <property type="RefSeq nucleotide sequence ID" value="NM_212558.3"/>
    <property type="RefSeq protein sequence ID" value="NP_997723.2"/>
</dbReference>
<dbReference type="UCSC" id="uc003zri.5">
    <property type="organism name" value="human"/>
</dbReference>
<dbReference type="AGR" id="HGNC:33816"/>
<dbReference type="CTD" id="401498"/>
<dbReference type="GeneCards" id="TMEM215"/>
<dbReference type="HGNC" id="HGNC:33816">
    <property type="gene designation" value="TMEM215"/>
</dbReference>
<dbReference type="HPA" id="ENSG00000188133">
    <property type="expression patterns" value="Tissue enriched (retina)"/>
</dbReference>
<dbReference type="neXtProt" id="NX_Q68D42"/>
<dbReference type="OpenTargets" id="ENSG00000188133"/>
<dbReference type="PharmGKB" id="PA162406544"/>
<dbReference type="VEuPathDB" id="HostDB:ENSG00000188133"/>
<dbReference type="eggNOG" id="ENOG502QZ55">
    <property type="taxonomic scope" value="Eukaryota"/>
</dbReference>
<dbReference type="GeneTree" id="ENSGT00390000006684"/>
<dbReference type="HOGENOM" id="CLU_1165487_0_0_1"/>
<dbReference type="InParanoid" id="Q68D42"/>
<dbReference type="OMA" id="DRSDCPE"/>
<dbReference type="OrthoDB" id="9304762at2759"/>
<dbReference type="PAN-GO" id="Q68D42">
    <property type="GO annotations" value="0 GO annotations based on evolutionary models"/>
</dbReference>
<dbReference type="PhylomeDB" id="Q68D42"/>
<dbReference type="TreeFam" id="TF335695"/>
<dbReference type="PathwayCommons" id="Q68D42"/>
<dbReference type="BioGRID-ORCS" id="401498">
    <property type="hits" value="6 hits in 1142 CRISPR screens"/>
</dbReference>
<dbReference type="GenomeRNAi" id="401498"/>
<dbReference type="Pharos" id="Q68D42">
    <property type="development level" value="Tdark"/>
</dbReference>
<dbReference type="PRO" id="PR:Q68D42"/>
<dbReference type="Proteomes" id="UP000005640">
    <property type="component" value="Chromosome 9"/>
</dbReference>
<dbReference type="RNAct" id="Q68D42">
    <property type="molecule type" value="protein"/>
</dbReference>
<dbReference type="Bgee" id="ENSG00000188133">
    <property type="expression patterns" value="Expressed in male germ line stem cell (sensu Vertebrata) in testis and 43 other cell types or tissues"/>
</dbReference>
<dbReference type="GO" id="GO:0016020">
    <property type="term" value="C:membrane"/>
    <property type="evidence" value="ECO:0007669"/>
    <property type="project" value="UniProtKB-SubCell"/>
</dbReference>
<dbReference type="GO" id="GO:0046671">
    <property type="term" value="P:negative regulation of retinal cell programmed cell death"/>
    <property type="evidence" value="ECO:0007669"/>
    <property type="project" value="Ensembl"/>
</dbReference>
<dbReference type="GO" id="GO:0002040">
    <property type="term" value="P:sprouting angiogenesis"/>
    <property type="evidence" value="ECO:0007669"/>
    <property type="project" value="Ensembl"/>
</dbReference>
<dbReference type="InterPro" id="IPR031486">
    <property type="entry name" value="TMEM215"/>
</dbReference>
<dbReference type="PANTHER" id="PTHR31922">
    <property type="entry name" value="TRANSMEMBRANE PROTEIN 215"/>
    <property type="match status" value="1"/>
</dbReference>
<dbReference type="PANTHER" id="PTHR31922:SF2">
    <property type="entry name" value="TRANSMEMBRANE PROTEIN 215"/>
    <property type="match status" value="1"/>
</dbReference>
<dbReference type="Pfam" id="PF15746">
    <property type="entry name" value="TMEM215"/>
    <property type="match status" value="1"/>
</dbReference>
<gene>
    <name type="primary">TMEM215</name>
</gene>
<sequence length="235" mass="25806">MRPDDINPRTGLVVALVSVFLVFGFMFTVSGMKGETLGNIPLLAIGPAICLPGIAAIALARKTEGCTKWPENELLWVRKLPCFRKPKDKEVVELLRTPSDLESGKGSSDELAKKAGLRGKPPPQSQGEVSVASSINSPTPTEEGECQSLVQNGHQEETSRYLDGYCPSGSSLTYSALDVKCSARDRSECPEPEDSIFFVPQDSIIVCSYKQNSPYDRYCCYINQIQGRWDHETIV</sequence>
<name>TM215_HUMAN</name>